<keyword id="KW-1015">Disulfide bond</keyword>
<keyword id="KW-1043">Host membrane</keyword>
<keyword id="KW-0472">Membrane</keyword>
<keyword id="KW-0812">Transmembrane</keyword>
<keyword id="KW-1133">Transmembrane helix</keyword>
<keyword id="KW-0261">Viral envelope protein</keyword>
<keyword id="KW-0946">Virion</keyword>
<protein>
    <recommendedName>
        <fullName>Membrane protein</fullName>
        <shortName>Protein M</shortName>
    </recommendedName>
</protein>
<organism>
    <name type="scientific">Porcine reproductive and respiratory syndrome virus (isolate Pig/United States/SD 01-08/2001)</name>
    <name type="common">PRRSV</name>
    <dbReference type="NCBI Taxonomy" id="857306"/>
    <lineage>
        <taxon>Viruses</taxon>
        <taxon>Riboviria</taxon>
        <taxon>Orthornavirae</taxon>
        <taxon>Pisuviricota</taxon>
        <taxon>Pisoniviricetes</taxon>
        <taxon>Nidovirales</taxon>
        <taxon>Arnidovirineae</taxon>
        <taxon>Arteriviridae</taxon>
        <taxon>Variarterivirinae</taxon>
        <taxon>Betaarterivirus</taxon>
        <taxon>Ampobartevirus</taxon>
        <taxon>Betaarterivirus americense</taxon>
    </lineage>
</organism>
<accession>A0MD35</accession>
<organismHost>
    <name type="scientific">Sus scrofa</name>
    <name type="common">Pig</name>
    <dbReference type="NCBI Taxonomy" id="9823"/>
</organismHost>
<dbReference type="EMBL" id="DQ489311">
    <property type="protein sequence ID" value="ABF66347.1"/>
    <property type="molecule type" value="Genomic_RNA"/>
</dbReference>
<dbReference type="Proteomes" id="UP000000937">
    <property type="component" value="Genome"/>
</dbReference>
<dbReference type="GO" id="GO:0033644">
    <property type="term" value="C:host cell membrane"/>
    <property type="evidence" value="ECO:0007669"/>
    <property type="project" value="UniProtKB-SubCell"/>
</dbReference>
<dbReference type="GO" id="GO:0016020">
    <property type="term" value="C:membrane"/>
    <property type="evidence" value="ECO:0007669"/>
    <property type="project" value="UniProtKB-KW"/>
</dbReference>
<dbReference type="GO" id="GO:0019031">
    <property type="term" value="C:viral envelope"/>
    <property type="evidence" value="ECO:0007669"/>
    <property type="project" value="UniProtKB-KW"/>
</dbReference>
<dbReference type="GO" id="GO:0055036">
    <property type="term" value="C:virion membrane"/>
    <property type="evidence" value="ECO:0007669"/>
    <property type="project" value="UniProtKB-SubCell"/>
</dbReference>
<dbReference type="InterPro" id="IPR001332">
    <property type="entry name" value="Arteri_GP5"/>
</dbReference>
<dbReference type="Pfam" id="PF00951">
    <property type="entry name" value="Arteri_Gl"/>
    <property type="match status" value="1"/>
</dbReference>
<reference key="1">
    <citation type="journal article" date="2006" name="Adv. Exp. Med. Biol.">
        <title>Construction of a full-length cDNA infectious clone of a European-like Type 1 PRRSV isolated in the U.S.</title>
        <authorList>
            <person name="Fang Y."/>
            <person name="Faaberg K.S."/>
            <person name="Rowland R.R."/>
            <person name="Christopher-Hennings J."/>
            <person name="Pattnaik A.K."/>
            <person name="Osorio F."/>
            <person name="Nelson E.A."/>
        </authorList>
    </citation>
    <scope>NUCLEOTIDE SEQUENCE [GENOMIC RNA]</scope>
    <source>
        <strain>Infectious clone SD 01-08</strain>
    </source>
</reference>
<evidence type="ECO:0000250" key="1"/>
<evidence type="ECO:0000255" key="2"/>
<evidence type="ECO:0000305" key="3"/>
<sequence>MGGLDNFCNDPTAAQKIVLAFSITYTPIMIYALKVSRGRLLGLLHILIFLNCSFTFGYMTYVHFHSTHRVALTLGAVVALLWGVYSLTESWKFITSRCRLCCLGRRYILAPAHHVESAAGLHSISASGNRAYAVRKPGLTSVNGTLVPGLRSLVLGGKRAVKRGVVNLVKYGR</sequence>
<name>M_PRRSS</name>
<proteinExistence type="inferred from homology"/>
<comment type="function">
    <text evidence="1">Major envelope protein.</text>
</comment>
<comment type="subunit">
    <text>Heterodimer with glycoprotein 5; disulfide-linked. This heterodimerization is required for transport to the Golgi complex.</text>
</comment>
<comment type="subcellular location">
    <subcellularLocation>
        <location evidence="3">Virion membrane</location>
        <topology evidence="3">Multi-pass membrane protein</topology>
    </subcellularLocation>
    <subcellularLocation>
        <location evidence="3">Host membrane</location>
        <topology evidence="3">Multi-pass membrane protein</topology>
    </subcellularLocation>
</comment>
<comment type="similarity">
    <text evidence="3">Belongs to the arteriviridae membrane protein family.</text>
</comment>
<feature type="chain" id="PRO_0000410888" description="Membrane protein">
    <location>
        <begin position="1"/>
        <end position="173"/>
    </location>
</feature>
<feature type="topological domain" description="Virion surface" evidence="2">
    <location>
        <begin position="1"/>
        <end position="12"/>
    </location>
</feature>
<feature type="transmembrane region" description="Helical" evidence="2">
    <location>
        <begin position="13"/>
        <end position="33"/>
    </location>
</feature>
<feature type="topological domain" description="Intravirion" evidence="2">
    <location>
        <begin position="34"/>
        <end position="39"/>
    </location>
</feature>
<feature type="transmembrane region" description="Helical" evidence="2">
    <location>
        <begin position="40"/>
        <end position="60"/>
    </location>
</feature>
<feature type="topological domain" description="Virion surface" evidence="2">
    <location>
        <begin position="61"/>
        <end position="69"/>
    </location>
</feature>
<feature type="transmembrane region" description="Helical" evidence="2">
    <location>
        <begin position="70"/>
        <end position="90"/>
    </location>
</feature>
<feature type="topological domain" description="Intravirion" evidence="2">
    <location>
        <begin position="91"/>
        <end position="173"/>
    </location>
</feature>
<feature type="disulfide bond" description="Interchain (with C-24 in GP5)" evidence="1">
    <location>
        <position position="8"/>
    </location>
</feature>
<gene>
    <name type="primary">M</name>
    <name type="ORF">6</name>
</gene>